<reference key="1">
    <citation type="journal article" date="2011" name="J. Bacteriol.">
        <title>Complete genome sequence of the metabolically versatile plant growth-promoting endophyte, Variovorax paradoxus S110.</title>
        <authorList>
            <person name="Han J.I."/>
            <person name="Choi H.K."/>
            <person name="Lee S.W."/>
            <person name="Orwin P.M."/>
            <person name="Kim J."/>
            <person name="Laroe S.L."/>
            <person name="Kim T.G."/>
            <person name="O'Neil J."/>
            <person name="Leadbetter J.R."/>
            <person name="Lee S.Y."/>
            <person name="Hur C.G."/>
            <person name="Spain J.C."/>
            <person name="Ovchinnikova G."/>
            <person name="Goodwin L."/>
            <person name="Han C."/>
        </authorList>
    </citation>
    <scope>NUCLEOTIDE SEQUENCE [LARGE SCALE GENOMIC DNA]</scope>
    <source>
        <strain>S110</strain>
    </source>
</reference>
<sequence>MNQLDALRQWTTVVADTGDFKQLAISRPQDATTNPSLILKAVQKPEYRPLLDEAVSKHAGKPLDEVIDRLLVRFGTEILSIIPGRVSTEVDARLSFDTAATVARGERIVALYKAEGIDTEKRLLIKVASTWEGIEAARTLEQKGIRTNLTLLFSFAQAVACGAAGVQLISPFVGRIYDWYKKSAGAQWNEAASAGANDPGVKSVRQIFEYYKQHGIKTEVMGASFRNVGQIRALAGCDLLTISPELLAELAASNEPLAHALDAKAATGGDVAKVSYDEAGFRFALNEDAMATEKLAEGIRAFAADAVKLEKLMQESGK</sequence>
<proteinExistence type="inferred from homology"/>
<feature type="chain" id="PRO_1000206466" description="Transaldolase">
    <location>
        <begin position="1"/>
        <end position="318"/>
    </location>
</feature>
<feature type="active site" description="Schiff-base intermediate with substrate" evidence="2">
    <location>
        <position position="126"/>
    </location>
</feature>
<keyword id="KW-0963">Cytoplasm</keyword>
<keyword id="KW-0570">Pentose shunt</keyword>
<keyword id="KW-0704">Schiff base</keyword>
<keyword id="KW-0808">Transferase</keyword>
<gene>
    <name evidence="2" type="primary">tal</name>
    <name type="ordered locus">Vapar_1102</name>
</gene>
<comment type="function">
    <text evidence="2">Transaldolase is important for the balance of metabolites in the pentose-phosphate pathway.</text>
</comment>
<comment type="catalytic activity">
    <reaction evidence="2">
        <text>D-sedoheptulose 7-phosphate + D-glyceraldehyde 3-phosphate = D-erythrose 4-phosphate + beta-D-fructose 6-phosphate</text>
        <dbReference type="Rhea" id="RHEA:17053"/>
        <dbReference type="ChEBI" id="CHEBI:16897"/>
        <dbReference type="ChEBI" id="CHEBI:57483"/>
        <dbReference type="ChEBI" id="CHEBI:57634"/>
        <dbReference type="ChEBI" id="CHEBI:59776"/>
        <dbReference type="EC" id="2.2.1.2"/>
    </reaction>
</comment>
<comment type="pathway">
    <text evidence="2">Carbohydrate degradation; pentose phosphate pathway; D-glyceraldehyde 3-phosphate and beta-D-fructose 6-phosphate from D-ribose 5-phosphate and D-xylulose 5-phosphate (non-oxidative stage): step 2/3.</text>
</comment>
<comment type="subunit">
    <text evidence="1">Homodimer.</text>
</comment>
<comment type="subcellular location">
    <subcellularLocation>
        <location evidence="2">Cytoplasm</location>
    </subcellularLocation>
</comment>
<comment type="similarity">
    <text evidence="2">Belongs to the transaldolase family. Type 1 subfamily.</text>
</comment>
<name>TAL_VARPS</name>
<protein>
    <recommendedName>
        <fullName evidence="2">Transaldolase</fullName>
        <ecNumber evidence="2">2.2.1.2</ecNumber>
    </recommendedName>
</protein>
<evidence type="ECO:0000250" key="1"/>
<evidence type="ECO:0000255" key="2">
    <source>
        <dbReference type="HAMAP-Rule" id="MF_00492"/>
    </source>
</evidence>
<dbReference type="EC" id="2.2.1.2" evidence="2"/>
<dbReference type="EMBL" id="CP001635">
    <property type="protein sequence ID" value="ACS17753.1"/>
    <property type="molecule type" value="Genomic_DNA"/>
</dbReference>
<dbReference type="SMR" id="C5CPN2"/>
<dbReference type="STRING" id="543728.Vapar_1102"/>
<dbReference type="KEGG" id="vap:Vapar_1102"/>
<dbReference type="eggNOG" id="COG0176">
    <property type="taxonomic scope" value="Bacteria"/>
</dbReference>
<dbReference type="HOGENOM" id="CLU_047470_0_1_4"/>
<dbReference type="OrthoDB" id="9809101at2"/>
<dbReference type="UniPathway" id="UPA00115">
    <property type="reaction ID" value="UER00414"/>
</dbReference>
<dbReference type="GO" id="GO:0005737">
    <property type="term" value="C:cytoplasm"/>
    <property type="evidence" value="ECO:0007669"/>
    <property type="project" value="UniProtKB-SubCell"/>
</dbReference>
<dbReference type="GO" id="GO:0004801">
    <property type="term" value="F:transaldolase activity"/>
    <property type="evidence" value="ECO:0000250"/>
    <property type="project" value="UniProtKB"/>
</dbReference>
<dbReference type="GO" id="GO:0005975">
    <property type="term" value="P:carbohydrate metabolic process"/>
    <property type="evidence" value="ECO:0007669"/>
    <property type="project" value="InterPro"/>
</dbReference>
<dbReference type="GO" id="GO:0009052">
    <property type="term" value="P:pentose-phosphate shunt, non-oxidative branch"/>
    <property type="evidence" value="ECO:0007669"/>
    <property type="project" value="TreeGrafter"/>
</dbReference>
<dbReference type="CDD" id="cd00957">
    <property type="entry name" value="Transaldolase_TalAB"/>
    <property type="match status" value="1"/>
</dbReference>
<dbReference type="FunFam" id="3.20.20.70:FF:000002">
    <property type="entry name" value="Transaldolase"/>
    <property type="match status" value="1"/>
</dbReference>
<dbReference type="Gene3D" id="3.20.20.70">
    <property type="entry name" value="Aldolase class I"/>
    <property type="match status" value="1"/>
</dbReference>
<dbReference type="HAMAP" id="MF_00492">
    <property type="entry name" value="Transaldolase_1"/>
    <property type="match status" value="1"/>
</dbReference>
<dbReference type="InterPro" id="IPR013785">
    <property type="entry name" value="Aldolase_TIM"/>
</dbReference>
<dbReference type="InterPro" id="IPR001585">
    <property type="entry name" value="TAL/FSA"/>
</dbReference>
<dbReference type="InterPro" id="IPR004730">
    <property type="entry name" value="Transaldolase_1"/>
</dbReference>
<dbReference type="InterPro" id="IPR018225">
    <property type="entry name" value="Transaldolase_AS"/>
</dbReference>
<dbReference type="NCBIfam" id="TIGR00874">
    <property type="entry name" value="talAB"/>
    <property type="match status" value="1"/>
</dbReference>
<dbReference type="PANTHER" id="PTHR10683">
    <property type="entry name" value="TRANSALDOLASE"/>
    <property type="match status" value="1"/>
</dbReference>
<dbReference type="PANTHER" id="PTHR10683:SF18">
    <property type="entry name" value="TRANSALDOLASE"/>
    <property type="match status" value="1"/>
</dbReference>
<dbReference type="Pfam" id="PF00923">
    <property type="entry name" value="TAL_FSA"/>
    <property type="match status" value="1"/>
</dbReference>
<dbReference type="SUPFAM" id="SSF51569">
    <property type="entry name" value="Aldolase"/>
    <property type="match status" value="1"/>
</dbReference>
<dbReference type="PROSITE" id="PS01054">
    <property type="entry name" value="TRANSALDOLASE_1"/>
    <property type="match status" value="1"/>
</dbReference>
<dbReference type="PROSITE" id="PS00958">
    <property type="entry name" value="TRANSALDOLASE_2"/>
    <property type="match status" value="1"/>
</dbReference>
<organism>
    <name type="scientific">Variovorax paradoxus (strain S110)</name>
    <dbReference type="NCBI Taxonomy" id="543728"/>
    <lineage>
        <taxon>Bacteria</taxon>
        <taxon>Pseudomonadati</taxon>
        <taxon>Pseudomonadota</taxon>
        <taxon>Betaproteobacteria</taxon>
        <taxon>Burkholderiales</taxon>
        <taxon>Comamonadaceae</taxon>
        <taxon>Variovorax</taxon>
    </lineage>
</organism>
<accession>C5CPN2</accession>